<reference key="1">
    <citation type="journal article" date="2011" name="J. Bacteriol.">
        <title>Comparative genomics of 28 Salmonella enterica isolates: evidence for CRISPR-mediated adaptive sublineage evolution.</title>
        <authorList>
            <person name="Fricke W.F."/>
            <person name="Mammel M.K."/>
            <person name="McDermott P.F."/>
            <person name="Tartera C."/>
            <person name="White D.G."/>
            <person name="Leclerc J.E."/>
            <person name="Ravel J."/>
            <person name="Cebula T.A."/>
        </authorList>
    </citation>
    <scope>NUCLEOTIDE SEQUENCE [LARGE SCALE GENOMIC DNA]</scope>
    <source>
        <strain>SL476</strain>
    </source>
</reference>
<feature type="chain" id="PRO_1000193648" description="Gamma-glutamyl phosphate reductase">
    <location>
        <begin position="1"/>
        <end position="416"/>
    </location>
</feature>
<proteinExistence type="inferred from homology"/>
<protein>
    <recommendedName>
        <fullName evidence="1">Gamma-glutamyl phosphate reductase</fullName>
        <shortName evidence="1">GPR</shortName>
        <ecNumber evidence="1">1.2.1.41</ecNumber>
    </recommendedName>
    <alternativeName>
        <fullName evidence="1">Glutamate-5-semialdehyde dehydrogenase</fullName>
    </alternativeName>
    <alternativeName>
        <fullName evidence="1">Glutamyl-gamma-semialdehyde dehydrogenase</fullName>
        <shortName evidence="1">GSA dehydrogenase</shortName>
    </alternativeName>
</protein>
<sequence length="416" mass="44611">MLEQMGIAAKAASYKLALLSSGEKNRVLEKIADELEAQMESILSANVQDVEQARANGLSEAMLDRLALTPARLKAIADDVRQVCNLADPVGQVIDGGLLDSGLRLERRRVPLGVVGVIYEARPNVTVDVASLCLKTGNAVILRGGKETHRTNAATVRVIQKALKACGLPEAAVQAIDNPDRSLVNEMLRMDKYIDMLIPRGGAGLHKLCREQSTIPVITGGIGVCHIFVDSSADIAPALKIIVNAKTQRPSTCNTVETLLVHQDIAERFLPALSKQMAESGVTLHGDETVMQALHGPAKLVPLKPEELDNEFLSLDLNVVVVENMDGAIAHIREHGTQHSDAILTCDMHNAARFVNEVDSAAVYVNASTRFTDGGQFGLGAEVAVSTQKLHARGPMGLEALTTYKWIGFGDGTIRA</sequence>
<keyword id="KW-0028">Amino-acid biosynthesis</keyword>
<keyword id="KW-0963">Cytoplasm</keyword>
<keyword id="KW-0521">NADP</keyword>
<keyword id="KW-0560">Oxidoreductase</keyword>
<keyword id="KW-0641">Proline biosynthesis</keyword>
<comment type="function">
    <text evidence="1">Catalyzes the NADPH-dependent reduction of L-glutamate 5-phosphate into L-glutamate 5-semialdehyde and phosphate. The product spontaneously undergoes cyclization to form 1-pyrroline-5-carboxylate.</text>
</comment>
<comment type="catalytic activity">
    <reaction evidence="1">
        <text>L-glutamate 5-semialdehyde + phosphate + NADP(+) = L-glutamyl 5-phosphate + NADPH + H(+)</text>
        <dbReference type="Rhea" id="RHEA:19541"/>
        <dbReference type="ChEBI" id="CHEBI:15378"/>
        <dbReference type="ChEBI" id="CHEBI:43474"/>
        <dbReference type="ChEBI" id="CHEBI:57783"/>
        <dbReference type="ChEBI" id="CHEBI:58066"/>
        <dbReference type="ChEBI" id="CHEBI:58274"/>
        <dbReference type="ChEBI" id="CHEBI:58349"/>
        <dbReference type="EC" id="1.2.1.41"/>
    </reaction>
</comment>
<comment type="pathway">
    <text evidence="1">Amino-acid biosynthesis; L-proline biosynthesis; L-glutamate 5-semialdehyde from L-glutamate: step 2/2.</text>
</comment>
<comment type="subcellular location">
    <subcellularLocation>
        <location evidence="1">Cytoplasm</location>
    </subcellularLocation>
</comment>
<comment type="similarity">
    <text evidence="1">Belongs to the gamma-glutamyl phosphate reductase family.</text>
</comment>
<accession>B4T7Q6</accession>
<dbReference type="EC" id="1.2.1.41" evidence="1"/>
<dbReference type="EMBL" id="CP001120">
    <property type="protein sequence ID" value="ACF69594.1"/>
    <property type="molecule type" value="Genomic_DNA"/>
</dbReference>
<dbReference type="RefSeq" id="WP_000893221.1">
    <property type="nucleotide sequence ID" value="NC_011083.1"/>
</dbReference>
<dbReference type="SMR" id="B4T7Q6"/>
<dbReference type="KEGG" id="seh:SeHA_C0364"/>
<dbReference type="HOGENOM" id="CLU_030231_0_0_6"/>
<dbReference type="UniPathway" id="UPA00098">
    <property type="reaction ID" value="UER00360"/>
</dbReference>
<dbReference type="Proteomes" id="UP000001866">
    <property type="component" value="Chromosome"/>
</dbReference>
<dbReference type="GO" id="GO:0005737">
    <property type="term" value="C:cytoplasm"/>
    <property type="evidence" value="ECO:0007669"/>
    <property type="project" value="UniProtKB-SubCell"/>
</dbReference>
<dbReference type="GO" id="GO:0004350">
    <property type="term" value="F:glutamate-5-semialdehyde dehydrogenase activity"/>
    <property type="evidence" value="ECO:0007669"/>
    <property type="project" value="UniProtKB-UniRule"/>
</dbReference>
<dbReference type="GO" id="GO:0050661">
    <property type="term" value="F:NADP binding"/>
    <property type="evidence" value="ECO:0007669"/>
    <property type="project" value="InterPro"/>
</dbReference>
<dbReference type="GO" id="GO:0055129">
    <property type="term" value="P:L-proline biosynthetic process"/>
    <property type="evidence" value="ECO:0007669"/>
    <property type="project" value="UniProtKB-UniRule"/>
</dbReference>
<dbReference type="CDD" id="cd07079">
    <property type="entry name" value="ALDH_F18-19_ProA-GPR"/>
    <property type="match status" value="1"/>
</dbReference>
<dbReference type="FunFam" id="3.40.309.10:FF:000006">
    <property type="entry name" value="Gamma-glutamyl phosphate reductase"/>
    <property type="match status" value="1"/>
</dbReference>
<dbReference type="Gene3D" id="3.40.605.10">
    <property type="entry name" value="Aldehyde Dehydrogenase, Chain A, domain 1"/>
    <property type="match status" value="1"/>
</dbReference>
<dbReference type="Gene3D" id="3.40.309.10">
    <property type="entry name" value="Aldehyde Dehydrogenase, Chain A, domain 2"/>
    <property type="match status" value="1"/>
</dbReference>
<dbReference type="HAMAP" id="MF_00412">
    <property type="entry name" value="ProA"/>
    <property type="match status" value="1"/>
</dbReference>
<dbReference type="InterPro" id="IPR016161">
    <property type="entry name" value="Ald_DH/histidinol_DH"/>
</dbReference>
<dbReference type="InterPro" id="IPR016163">
    <property type="entry name" value="Ald_DH_C"/>
</dbReference>
<dbReference type="InterPro" id="IPR016162">
    <property type="entry name" value="Ald_DH_N"/>
</dbReference>
<dbReference type="InterPro" id="IPR015590">
    <property type="entry name" value="Aldehyde_DH_dom"/>
</dbReference>
<dbReference type="InterPro" id="IPR020593">
    <property type="entry name" value="G-glutamylP_reductase_CS"/>
</dbReference>
<dbReference type="InterPro" id="IPR012134">
    <property type="entry name" value="Glu-5-SA_DH"/>
</dbReference>
<dbReference type="InterPro" id="IPR000965">
    <property type="entry name" value="GPR_dom"/>
</dbReference>
<dbReference type="NCBIfam" id="NF001221">
    <property type="entry name" value="PRK00197.1"/>
    <property type="match status" value="1"/>
</dbReference>
<dbReference type="NCBIfam" id="TIGR00407">
    <property type="entry name" value="proA"/>
    <property type="match status" value="1"/>
</dbReference>
<dbReference type="PANTHER" id="PTHR11063:SF8">
    <property type="entry name" value="DELTA-1-PYRROLINE-5-CARBOXYLATE SYNTHASE"/>
    <property type="match status" value="1"/>
</dbReference>
<dbReference type="PANTHER" id="PTHR11063">
    <property type="entry name" value="GLUTAMATE SEMIALDEHYDE DEHYDROGENASE"/>
    <property type="match status" value="1"/>
</dbReference>
<dbReference type="Pfam" id="PF00171">
    <property type="entry name" value="Aldedh"/>
    <property type="match status" value="1"/>
</dbReference>
<dbReference type="PIRSF" id="PIRSF000151">
    <property type="entry name" value="GPR"/>
    <property type="match status" value="1"/>
</dbReference>
<dbReference type="SUPFAM" id="SSF53720">
    <property type="entry name" value="ALDH-like"/>
    <property type="match status" value="1"/>
</dbReference>
<dbReference type="PROSITE" id="PS01223">
    <property type="entry name" value="PROA"/>
    <property type="match status" value="1"/>
</dbReference>
<name>PROA_SALHS</name>
<organism>
    <name type="scientific">Salmonella heidelberg (strain SL476)</name>
    <dbReference type="NCBI Taxonomy" id="454169"/>
    <lineage>
        <taxon>Bacteria</taxon>
        <taxon>Pseudomonadati</taxon>
        <taxon>Pseudomonadota</taxon>
        <taxon>Gammaproteobacteria</taxon>
        <taxon>Enterobacterales</taxon>
        <taxon>Enterobacteriaceae</taxon>
        <taxon>Salmonella</taxon>
    </lineage>
</organism>
<evidence type="ECO:0000255" key="1">
    <source>
        <dbReference type="HAMAP-Rule" id="MF_00412"/>
    </source>
</evidence>
<gene>
    <name evidence="1" type="primary">proA</name>
    <name type="ordered locus">SeHA_C0364</name>
</gene>